<organism>
    <name type="scientific">Brucella abortus (strain 2308)</name>
    <dbReference type="NCBI Taxonomy" id="359391"/>
    <lineage>
        <taxon>Bacteria</taxon>
        <taxon>Pseudomonadati</taxon>
        <taxon>Pseudomonadota</taxon>
        <taxon>Alphaproteobacteria</taxon>
        <taxon>Hyphomicrobiales</taxon>
        <taxon>Brucellaceae</taxon>
        <taxon>Brucella/Ochrobactrum group</taxon>
        <taxon>Brucella</taxon>
    </lineage>
</organism>
<proteinExistence type="inferred from homology"/>
<accession>Q2YIJ8</accession>
<accession>Q44623</accession>
<accession>Q579Q5</accession>
<comment type="function">
    <text evidence="2">Intake of glucose and galactose.</text>
</comment>
<comment type="subcellular location">
    <subcellularLocation>
        <location evidence="2">Cell inner membrane</location>
        <topology evidence="2">Multi-pass membrane protein</topology>
    </subcellularLocation>
</comment>
<comment type="similarity">
    <text evidence="2">Belongs to the major facilitator superfamily. FHS transporter (TC 2.A.1.7) family.</text>
</comment>
<protein>
    <recommendedName>
        <fullName>Glucose/galactose transporter</fullName>
    </recommendedName>
</protein>
<name>GLUP_BRUA2</name>
<sequence length="412" mass="43801">MATSIPTNNPLHTETSSQKNYGFALTSLTLLFFMWGFITCLNDILIPHLKNVFQLNYTQSMLIQFCFFGAYFIVSLPAGQLVKRISYKRGIVVGLIVAAIGCALFIPAASYRVYALFLGALFVLASGVTILQVAANPYVTILGKPETAASRLTLTQAFNSLGTTVAPVFGAVLILSAATDATVNAEADAVRFPYLLLALAFTVLAIIFAILKPPDVQEDEPALSDKKEGSAWQYRHLVLGAIGIFVYVGAEVSVGSFLVNFLSDPTVAGLSETDAAHHVAYFWGGAMVGRFIGSAAMRYIDDGKALAFNAFVAIILLFITVATTGHIAMWSVLAIGLFNSIMFPTIFSLALHGLGSHTSQGSGILCLAIVGGAIVPLIQGALADAIGIHLAFLMPIICYAYIAFYGLIGSKS</sequence>
<feature type="chain" id="PRO_0000094504" description="Glucose/galactose transporter">
    <location>
        <begin position="1"/>
        <end position="412"/>
    </location>
</feature>
<feature type="transmembrane region" description="Helical" evidence="1">
    <location>
        <begin position="21"/>
        <end position="41"/>
    </location>
</feature>
<feature type="transmembrane region" description="Helical" evidence="1">
    <location>
        <begin position="62"/>
        <end position="82"/>
    </location>
</feature>
<feature type="transmembrane region" description="Helical" evidence="1">
    <location>
        <begin position="90"/>
        <end position="110"/>
    </location>
</feature>
<feature type="transmembrane region" description="Helical" evidence="1">
    <location>
        <begin position="113"/>
        <end position="133"/>
    </location>
</feature>
<feature type="transmembrane region" description="Helical" evidence="1">
    <location>
        <begin position="158"/>
        <end position="178"/>
    </location>
</feature>
<feature type="transmembrane region" description="Helical" evidence="1">
    <location>
        <begin position="192"/>
        <end position="212"/>
    </location>
</feature>
<feature type="transmembrane region" description="Helical" evidence="1">
    <location>
        <begin position="239"/>
        <end position="259"/>
    </location>
</feature>
<feature type="transmembrane region" description="Helical" evidence="1">
    <location>
        <begin position="310"/>
        <end position="330"/>
    </location>
</feature>
<feature type="transmembrane region" description="Helical" evidence="1">
    <location>
        <begin position="331"/>
        <end position="351"/>
    </location>
</feature>
<feature type="transmembrane region" description="Helical" evidence="1">
    <location>
        <begin position="363"/>
        <end position="383"/>
    </location>
</feature>
<feature type="transmembrane region" description="Helical" evidence="1">
    <location>
        <begin position="388"/>
        <end position="408"/>
    </location>
</feature>
<feature type="sequence conflict" description="In Ref. 1; AAB58958." evidence="2" ref="1">
    <original>A</original>
    <variation>D</variation>
    <location>
        <position position="286"/>
    </location>
</feature>
<feature type="sequence conflict" description="In Ref. 1; AAB58958." evidence="2" ref="1">
    <original>N</original>
    <variation>D</variation>
    <location>
        <position position="309"/>
    </location>
</feature>
<feature type="sequence conflict" description="In Ref. 1; AAB58958." evidence="2" ref="1">
    <original>S</original>
    <variation>T</variation>
    <location>
        <position position="410"/>
    </location>
</feature>
<gene>
    <name type="primary">gluP</name>
    <name type="ordered locus">BAB2_0184</name>
</gene>
<reference key="1">
    <citation type="journal article" date="1997" name="Microbiology">
        <title>Brucella abortus strain 2308 putative glucose and galactose transporter gene: cloning and characterization.</title>
        <authorList>
            <person name="Essenberg R.C."/>
            <person name="Candler C."/>
            <person name="Nida S.K."/>
        </authorList>
    </citation>
    <scope>NUCLEOTIDE SEQUENCE [GENOMIC DNA]</scope>
</reference>
<reference key="2">
    <citation type="journal article" date="2005" name="Infect. Immun.">
        <title>Whole-genome analyses of speciation events in pathogenic Brucellae.</title>
        <authorList>
            <person name="Chain P.S."/>
            <person name="Comerci D.J."/>
            <person name="Tolmasky M.E."/>
            <person name="Larimer F.W."/>
            <person name="Malfatti S.A."/>
            <person name="Vergez L.M."/>
            <person name="Aguero F."/>
            <person name="Land M.L."/>
            <person name="Ugalde R.A."/>
            <person name="Garcia E."/>
        </authorList>
    </citation>
    <scope>NUCLEOTIDE SEQUENCE [LARGE SCALE GENOMIC DNA]</scope>
    <source>
        <strain>2308</strain>
    </source>
</reference>
<evidence type="ECO:0000255" key="1"/>
<evidence type="ECO:0000305" key="2"/>
<keyword id="KW-0997">Cell inner membrane</keyword>
<keyword id="KW-1003">Cell membrane</keyword>
<keyword id="KW-0472">Membrane</keyword>
<keyword id="KW-1185">Reference proteome</keyword>
<keyword id="KW-0762">Sugar transport</keyword>
<keyword id="KW-0812">Transmembrane</keyword>
<keyword id="KW-1133">Transmembrane helix</keyword>
<keyword id="KW-0813">Transport</keyword>
<dbReference type="EMBL" id="U43785">
    <property type="protein sequence ID" value="AAB58958.1"/>
    <property type="molecule type" value="Genomic_DNA"/>
</dbReference>
<dbReference type="EMBL" id="AM040265">
    <property type="protein sequence ID" value="CAJ12350.1"/>
    <property type="molecule type" value="Genomic_DNA"/>
</dbReference>
<dbReference type="RefSeq" id="WP_002966392.1">
    <property type="nucleotide sequence ID" value="NZ_KN046823.1"/>
</dbReference>
<dbReference type="SMR" id="Q2YIJ8"/>
<dbReference type="STRING" id="359391.BAB2_0184"/>
<dbReference type="KEGG" id="bmf:BAB2_0184"/>
<dbReference type="PATRIC" id="fig|359391.11.peg.2134"/>
<dbReference type="HOGENOM" id="CLU_028452_2_2_5"/>
<dbReference type="PhylomeDB" id="Q2YIJ8"/>
<dbReference type="Proteomes" id="UP000002719">
    <property type="component" value="Chromosome II"/>
</dbReference>
<dbReference type="GO" id="GO:0005886">
    <property type="term" value="C:plasma membrane"/>
    <property type="evidence" value="ECO:0007669"/>
    <property type="project" value="UniProtKB-SubCell"/>
</dbReference>
<dbReference type="GO" id="GO:0055056">
    <property type="term" value="F:D-glucose transmembrane transporter activity"/>
    <property type="evidence" value="ECO:0007669"/>
    <property type="project" value="InterPro"/>
</dbReference>
<dbReference type="GO" id="GO:0005354">
    <property type="term" value="F:galactose transmembrane transporter activity"/>
    <property type="evidence" value="ECO:0007669"/>
    <property type="project" value="InterPro"/>
</dbReference>
<dbReference type="GO" id="GO:1904659">
    <property type="term" value="P:D-glucose transmembrane transport"/>
    <property type="evidence" value="ECO:0007669"/>
    <property type="project" value="InterPro"/>
</dbReference>
<dbReference type="CDD" id="cd17394">
    <property type="entry name" value="MFS_FucP_like"/>
    <property type="match status" value="1"/>
</dbReference>
<dbReference type="Gene3D" id="1.20.1250.20">
    <property type="entry name" value="MFS general substrate transporter like domains"/>
    <property type="match status" value="2"/>
</dbReference>
<dbReference type="InterPro" id="IPR005964">
    <property type="entry name" value="Glc/Gal_transptr_bac"/>
</dbReference>
<dbReference type="InterPro" id="IPR011701">
    <property type="entry name" value="MFS"/>
</dbReference>
<dbReference type="InterPro" id="IPR036259">
    <property type="entry name" value="MFS_trans_sf"/>
</dbReference>
<dbReference type="InterPro" id="IPR050375">
    <property type="entry name" value="MFS_TsgA-like"/>
</dbReference>
<dbReference type="NCBIfam" id="TIGR01272">
    <property type="entry name" value="gluP"/>
    <property type="match status" value="1"/>
</dbReference>
<dbReference type="PANTHER" id="PTHR43702">
    <property type="entry name" value="L-FUCOSE-PROTON SYMPORTER"/>
    <property type="match status" value="1"/>
</dbReference>
<dbReference type="PANTHER" id="PTHR43702:SF3">
    <property type="entry name" value="PROTEIN TSGA"/>
    <property type="match status" value="1"/>
</dbReference>
<dbReference type="Pfam" id="PF07690">
    <property type="entry name" value="MFS_1"/>
    <property type="match status" value="1"/>
</dbReference>
<dbReference type="SUPFAM" id="SSF103473">
    <property type="entry name" value="MFS general substrate transporter"/>
    <property type="match status" value="1"/>
</dbReference>